<gene>
    <name evidence="1" type="primary">tgt</name>
    <name type="ordered locus">Sala_2187</name>
</gene>
<accession>Q1GR26</accession>
<sequence length="375" mass="40786">MKPRFAFSISATDGAARAGVIAMQRGEIRTPAFMPVGTAATVKAMRPAEVRAAGADIILGNTYHLMLRPTAERMARFGGLHKFMGWDRPILTDSGGYQVMSLSALTKQSEEGVAFKSHLDGSRHMLTPERSMEIQRLLGSDIVMAFDECPPAGVDARRAEASMERSMRWAARSRAGFDAGEEHAARSALFGIQQGSLDEKLRARSAATLIDIGFDGYAIGGLAVGEGQAAMFGVLDFAPAQLPADRPRYLMGVGKPDDLVGAVARGVDMFDCVLPTRSGRNGQAFTWDGPLNIRNAKFADDQEPLDASCGCPVCTIWSRGYLHHLVRAGEMLGAMLMTQHNIHFYQDLMQAMRDAITTGRFAAFRSDFAARYRRA</sequence>
<feature type="chain" id="PRO_1000016860" description="Queuine tRNA-ribosyltransferase">
    <location>
        <begin position="1"/>
        <end position="375"/>
    </location>
</feature>
<feature type="region of interest" description="RNA binding" evidence="1">
    <location>
        <begin position="252"/>
        <end position="258"/>
    </location>
</feature>
<feature type="region of interest" description="RNA binding; important for wobble base 34 recognition" evidence="1">
    <location>
        <begin position="276"/>
        <end position="280"/>
    </location>
</feature>
<feature type="active site" description="Proton acceptor" evidence="1">
    <location>
        <position position="93"/>
    </location>
</feature>
<feature type="active site" description="Nucleophile" evidence="1">
    <location>
        <position position="271"/>
    </location>
</feature>
<feature type="binding site" evidence="1">
    <location>
        <begin position="93"/>
        <end position="97"/>
    </location>
    <ligand>
        <name>substrate</name>
    </ligand>
</feature>
<feature type="binding site" evidence="1">
    <location>
        <position position="147"/>
    </location>
    <ligand>
        <name>substrate</name>
    </ligand>
</feature>
<feature type="binding site" evidence="1">
    <location>
        <position position="194"/>
    </location>
    <ligand>
        <name>substrate</name>
    </ligand>
</feature>
<feature type="binding site" evidence="1">
    <location>
        <position position="221"/>
    </location>
    <ligand>
        <name>substrate</name>
    </ligand>
</feature>
<feature type="binding site" evidence="1">
    <location>
        <position position="309"/>
    </location>
    <ligand>
        <name>Zn(2+)</name>
        <dbReference type="ChEBI" id="CHEBI:29105"/>
    </ligand>
</feature>
<feature type="binding site" evidence="1">
    <location>
        <position position="311"/>
    </location>
    <ligand>
        <name>Zn(2+)</name>
        <dbReference type="ChEBI" id="CHEBI:29105"/>
    </ligand>
</feature>
<feature type="binding site" evidence="1">
    <location>
        <position position="314"/>
    </location>
    <ligand>
        <name>Zn(2+)</name>
        <dbReference type="ChEBI" id="CHEBI:29105"/>
    </ligand>
</feature>
<feature type="binding site" evidence="1">
    <location>
        <position position="340"/>
    </location>
    <ligand>
        <name>Zn(2+)</name>
        <dbReference type="ChEBI" id="CHEBI:29105"/>
    </ligand>
</feature>
<protein>
    <recommendedName>
        <fullName evidence="1">Queuine tRNA-ribosyltransferase</fullName>
        <ecNumber evidence="1">2.4.2.29</ecNumber>
    </recommendedName>
    <alternativeName>
        <fullName evidence="1">Guanine insertion enzyme</fullName>
    </alternativeName>
    <alternativeName>
        <fullName evidence="1">tRNA-guanine transglycosylase</fullName>
    </alternativeName>
</protein>
<evidence type="ECO:0000255" key="1">
    <source>
        <dbReference type="HAMAP-Rule" id="MF_00168"/>
    </source>
</evidence>
<name>TGT_SPHAL</name>
<proteinExistence type="inferred from homology"/>
<keyword id="KW-0328">Glycosyltransferase</keyword>
<keyword id="KW-0479">Metal-binding</keyword>
<keyword id="KW-0671">Queuosine biosynthesis</keyword>
<keyword id="KW-1185">Reference proteome</keyword>
<keyword id="KW-0808">Transferase</keyword>
<keyword id="KW-0819">tRNA processing</keyword>
<keyword id="KW-0862">Zinc</keyword>
<comment type="function">
    <text evidence="1">Catalyzes the base-exchange of a guanine (G) residue with the queuine precursor 7-aminomethyl-7-deazaguanine (PreQ1) at position 34 (anticodon wobble position) in tRNAs with GU(N) anticodons (tRNA-Asp, -Asn, -His and -Tyr). Catalysis occurs through a double-displacement mechanism. The nucleophile active site attacks the C1' of nucleotide 34 to detach the guanine base from the RNA, forming a covalent enzyme-RNA intermediate. The proton acceptor active site deprotonates the incoming PreQ1, allowing a nucleophilic attack on the C1' of the ribose to form the product. After dissociation, two additional enzymatic reactions on the tRNA convert PreQ1 to queuine (Q), resulting in the hypermodified nucleoside queuosine (7-(((4,5-cis-dihydroxy-2-cyclopenten-1-yl)amino)methyl)-7-deazaguanosine).</text>
</comment>
<comment type="catalytic activity">
    <reaction evidence="1">
        <text>7-aminomethyl-7-carbaguanine + guanosine(34) in tRNA = 7-aminomethyl-7-carbaguanosine(34) in tRNA + guanine</text>
        <dbReference type="Rhea" id="RHEA:24104"/>
        <dbReference type="Rhea" id="RHEA-COMP:10341"/>
        <dbReference type="Rhea" id="RHEA-COMP:10342"/>
        <dbReference type="ChEBI" id="CHEBI:16235"/>
        <dbReference type="ChEBI" id="CHEBI:58703"/>
        <dbReference type="ChEBI" id="CHEBI:74269"/>
        <dbReference type="ChEBI" id="CHEBI:82833"/>
        <dbReference type="EC" id="2.4.2.29"/>
    </reaction>
</comment>
<comment type="cofactor">
    <cofactor evidence="1">
        <name>Zn(2+)</name>
        <dbReference type="ChEBI" id="CHEBI:29105"/>
    </cofactor>
    <text evidence="1">Binds 1 zinc ion per subunit.</text>
</comment>
<comment type="pathway">
    <text evidence="1">tRNA modification; tRNA-queuosine biosynthesis.</text>
</comment>
<comment type="subunit">
    <text evidence="1">Homodimer. Within each dimer, one monomer is responsible for RNA recognition and catalysis, while the other monomer binds to the replacement base PreQ1.</text>
</comment>
<comment type="similarity">
    <text evidence="1">Belongs to the queuine tRNA-ribosyltransferase family.</text>
</comment>
<reference key="1">
    <citation type="journal article" date="2009" name="Proc. Natl. Acad. Sci. U.S.A.">
        <title>The genomic basis of trophic strategy in marine bacteria.</title>
        <authorList>
            <person name="Lauro F.M."/>
            <person name="McDougald D."/>
            <person name="Thomas T."/>
            <person name="Williams T.J."/>
            <person name="Egan S."/>
            <person name="Rice S."/>
            <person name="DeMaere M.Z."/>
            <person name="Ting L."/>
            <person name="Ertan H."/>
            <person name="Johnson J."/>
            <person name="Ferriera S."/>
            <person name="Lapidus A."/>
            <person name="Anderson I."/>
            <person name="Kyrpides N."/>
            <person name="Munk A.C."/>
            <person name="Detter C."/>
            <person name="Han C.S."/>
            <person name="Brown M.V."/>
            <person name="Robb F.T."/>
            <person name="Kjelleberg S."/>
            <person name="Cavicchioli R."/>
        </authorList>
    </citation>
    <scope>NUCLEOTIDE SEQUENCE [LARGE SCALE GENOMIC DNA]</scope>
    <source>
        <strain>DSM 13593 / LMG 18877 / RB2256</strain>
    </source>
</reference>
<organism>
    <name type="scientific">Sphingopyxis alaskensis (strain DSM 13593 / LMG 18877 / RB2256)</name>
    <name type="common">Sphingomonas alaskensis</name>
    <dbReference type="NCBI Taxonomy" id="317655"/>
    <lineage>
        <taxon>Bacteria</taxon>
        <taxon>Pseudomonadati</taxon>
        <taxon>Pseudomonadota</taxon>
        <taxon>Alphaproteobacteria</taxon>
        <taxon>Sphingomonadales</taxon>
        <taxon>Sphingomonadaceae</taxon>
        <taxon>Sphingopyxis</taxon>
    </lineage>
</organism>
<dbReference type="EC" id="2.4.2.29" evidence="1"/>
<dbReference type="EMBL" id="CP000356">
    <property type="protein sequence ID" value="ABF53896.1"/>
    <property type="molecule type" value="Genomic_DNA"/>
</dbReference>
<dbReference type="RefSeq" id="WP_011542472.1">
    <property type="nucleotide sequence ID" value="NC_008048.1"/>
</dbReference>
<dbReference type="SMR" id="Q1GR26"/>
<dbReference type="STRING" id="317655.Sala_2187"/>
<dbReference type="KEGG" id="sal:Sala_2187"/>
<dbReference type="eggNOG" id="COG0343">
    <property type="taxonomic scope" value="Bacteria"/>
</dbReference>
<dbReference type="HOGENOM" id="CLU_022060_0_1_5"/>
<dbReference type="OrthoDB" id="9805417at2"/>
<dbReference type="UniPathway" id="UPA00392"/>
<dbReference type="Proteomes" id="UP000006578">
    <property type="component" value="Chromosome"/>
</dbReference>
<dbReference type="GO" id="GO:0005829">
    <property type="term" value="C:cytosol"/>
    <property type="evidence" value="ECO:0007669"/>
    <property type="project" value="TreeGrafter"/>
</dbReference>
<dbReference type="GO" id="GO:0046872">
    <property type="term" value="F:metal ion binding"/>
    <property type="evidence" value="ECO:0007669"/>
    <property type="project" value="UniProtKB-KW"/>
</dbReference>
<dbReference type="GO" id="GO:0008479">
    <property type="term" value="F:tRNA-guanosine(34) queuine transglycosylase activity"/>
    <property type="evidence" value="ECO:0007669"/>
    <property type="project" value="UniProtKB-UniRule"/>
</dbReference>
<dbReference type="GO" id="GO:0008616">
    <property type="term" value="P:queuosine biosynthetic process"/>
    <property type="evidence" value="ECO:0007669"/>
    <property type="project" value="UniProtKB-UniRule"/>
</dbReference>
<dbReference type="GO" id="GO:0002099">
    <property type="term" value="P:tRNA wobble guanine modification"/>
    <property type="evidence" value="ECO:0007669"/>
    <property type="project" value="TreeGrafter"/>
</dbReference>
<dbReference type="GO" id="GO:0101030">
    <property type="term" value="P:tRNA-guanine transglycosylation"/>
    <property type="evidence" value="ECO:0007669"/>
    <property type="project" value="InterPro"/>
</dbReference>
<dbReference type="FunFam" id="3.20.20.105:FF:000001">
    <property type="entry name" value="Queuine tRNA-ribosyltransferase"/>
    <property type="match status" value="1"/>
</dbReference>
<dbReference type="Gene3D" id="3.20.20.105">
    <property type="entry name" value="Queuine tRNA-ribosyltransferase-like"/>
    <property type="match status" value="1"/>
</dbReference>
<dbReference type="HAMAP" id="MF_00168">
    <property type="entry name" value="Q_tRNA_Tgt"/>
    <property type="match status" value="1"/>
</dbReference>
<dbReference type="InterPro" id="IPR050076">
    <property type="entry name" value="ArchSynthase1/Queuine_TRR"/>
</dbReference>
<dbReference type="InterPro" id="IPR004803">
    <property type="entry name" value="TGT"/>
</dbReference>
<dbReference type="InterPro" id="IPR036511">
    <property type="entry name" value="TGT-like_sf"/>
</dbReference>
<dbReference type="InterPro" id="IPR002616">
    <property type="entry name" value="tRNA_ribo_trans-like"/>
</dbReference>
<dbReference type="NCBIfam" id="TIGR00430">
    <property type="entry name" value="Q_tRNA_tgt"/>
    <property type="match status" value="1"/>
</dbReference>
<dbReference type="NCBIfam" id="TIGR00449">
    <property type="entry name" value="tgt_general"/>
    <property type="match status" value="1"/>
</dbReference>
<dbReference type="PANTHER" id="PTHR46499">
    <property type="entry name" value="QUEUINE TRNA-RIBOSYLTRANSFERASE"/>
    <property type="match status" value="1"/>
</dbReference>
<dbReference type="PANTHER" id="PTHR46499:SF1">
    <property type="entry name" value="QUEUINE TRNA-RIBOSYLTRANSFERASE"/>
    <property type="match status" value="1"/>
</dbReference>
<dbReference type="Pfam" id="PF01702">
    <property type="entry name" value="TGT"/>
    <property type="match status" value="1"/>
</dbReference>
<dbReference type="SUPFAM" id="SSF51713">
    <property type="entry name" value="tRNA-guanine transglycosylase"/>
    <property type="match status" value="1"/>
</dbReference>